<protein>
    <recommendedName>
        <fullName evidence="1">Small ribosomal subunit protein eS8</fullName>
    </recommendedName>
    <alternativeName>
        <fullName evidence="3">30S ribosomal protein S8e</fullName>
    </alternativeName>
</protein>
<keyword id="KW-1185">Reference proteome</keyword>
<keyword id="KW-0687">Ribonucleoprotein</keyword>
<keyword id="KW-0689">Ribosomal protein</keyword>
<reference key="1">
    <citation type="journal article" date="2015" name="Microbiology">
        <title>Genome of Methanoregula boonei 6A8 reveals adaptations to oligotrophic peatland environments.</title>
        <authorList>
            <person name="Braeuer S."/>
            <person name="Cadillo-Quiroz H."/>
            <person name="Kyrpides N."/>
            <person name="Woyke T."/>
            <person name="Goodwin L."/>
            <person name="Detter C."/>
            <person name="Podell S."/>
            <person name="Yavitt J.B."/>
            <person name="Zinder S.H."/>
        </authorList>
    </citation>
    <scope>NUCLEOTIDE SEQUENCE [LARGE SCALE GENOMIC DNA]</scope>
    <source>
        <strain>DSM 21154 / JCM 14090 / 6A8</strain>
    </source>
</reference>
<feature type="chain" id="PRO_1000002340" description="Small ribosomal subunit protein eS8">
    <location>
        <begin position="1"/>
        <end position="125"/>
    </location>
</feature>
<feature type="region of interest" description="Disordered" evidence="2">
    <location>
        <begin position="1"/>
        <end position="20"/>
    </location>
</feature>
<organism>
    <name type="scientific">Methanoregula boonei (strain DSM 21154 / JCM 14090 / 6A8)</name>
    <dbReference type="NCBI Taxonomy" id="456442"/>
    <lineage>
        <taxon>Archaea</taxon>
        <taxon>Methanobacteriati</taxon>
        <taxon>Methanobacteriota</taxon>
        <taxon>Stenosarchaea group</taxon>
        <taxon>Methanomicrobia</taxon>
        <taxon>Methanomicrobiales</taxon>
        <taxon>Methanoregulaceae</taxon>
        <taxon>Methanoregula</taxon>
    </lineage>
</organism>
<gene>
    <name evidence="1" type="primary">rps8e</name>
    <name type="ordered locus">Mboo_2307</name>
</gene>
<sequence>MLWQGESIRKVTGGRRRPAQGKRRFEIGLAPADTHIGEDRSKLVRTTGGNTKIRSMRAQFANVTNLANGETKKVKIENVEENGANPNYVRRNLLTKGAIIRTEIGRARIMSRPGQDGIINAVLLA</sequence>
<evidence type="ECO:0000255" key="1">
    <source>
        <dbReference type="HAMAP-Rule" id="MF_00029"/>
    </source>
</evidence>
<evidence type="ECO:0000256" key="2">
    <source>
        <dbReference type="SAM" id="MobiDB-lite"/>
    </source>
</evidence>
<evidence type="ECO:0000305" key="3"/>
<dbReference type="EMBL" id="CP000780">
    <property type="protein sequence ID" value="ABS56821.1"/>
    <property type="molecule type" value="Genomic_DNA"/>
</dbReference>
<dbReference type="RefSeq" id="WP_012107881.1">
    <property type="nucleotide sequence ID" value="NC_009712.1"/>
</dbReference>
<dbReference type="SMR" id="A7IAR0"/>
<dbReference type="STRING" id="456442.Mboo_2307"/>
<dbReference type="GeneID" id="5409806"/>
<dbReference type="KEGG" id="mbn:Mboo_2307"/>
<dbReference type="eggNOG" id="arCOG04154">
    <property type="taxonomic scope" value="Archaea"/>
</dbReference>
<dbReference type="HOGENOM" id="CLU_080597_2_1_2"/>
<dbReference type="OrthoDB" id="372305at2157"/>
<dbReference type="Proteomes" id="UP000002408">
    <property type="component" value="Chromosome"/>
</dbReference>
<dbReference type="GO" id="GO:1990904">
    <property type="term" value="C:ribonucleoprotein complex"/>
    <property type="evidence" value="ECO:0007669"/>
    <property type="project" value="UniProtKB-KW"/>
</dbReference>
<dbReference type="GO" id="GO:0005840">
    <property type="term" value="C:ribosome"/>
    <property type="evidence" value="ECO:0007669"/>
    <property type="project" value="UniProtKB-KW"/>
</dbReference>
<dbReference type="GO" id="GO:0003735">
    <property type="term" value="F:structural constituent of ribosome"/>
    <property type="evidence" value="ECO:0007669"/>
    <property type="project" value="InterPro"/>
</dbReference>
<dbReference type="GO" id="GO:0006412">
    <property type="term" value="P:translation"/>
    <property type="evidence" value="ECO:0007669"/>
    <property type="project" value="UniProtKB-UniRule"/>
</dbReference>
<dbReference type="CDD" id="cd11382">
    <property type="entry name" value="Ribosomal_S8e"/>
    <property type="match status" value="1"/>
</dbReference>
<dbReference type="Gene3D" id="3.10.290.70">
    <property type="match status" value="1"/>
</dbReference>
<dbReference type="HAMAP" id="MF_00029">
    <property type="entry name" value="Ribosomal_eS8"/>
    <property type="match status" value="1"/>
</dbReference>
<dbReference type="InterPro" id="IPR001047">
    <property type="entry name" value="Ribosomal_eS8"/>
</dbReference>
<dbReference type="InterPro" id="IPR020919">
    <property type="entry name" value="Ribosomal_protein_eS8_arc"/>
</dbReference>
<dbReference type="InterPro" id="IPR022309">
    <property type="entry name" value="Ribosomal_Se8/biogenesis_NSA2"/>
</dbReference>
<dbReference type="NCBIfam" id="TIGR00307">
    <property type="entry name" value="eS8"/>
    <property type="match status" value="1"/>
</dbReference>
<dbReference type="PANTHER" id="PTHR10394">
    <property type="entry name" value="40S RIBOSOMAL PROTEIN S8"/>
    <property type="match status" value="1"/>
</dbReference>
<dbReference type="Pfam" id="PF01201">
    <property type="entry name" value="Ribosomal_S8e"/>
    <property type="match status" value="1"/>
</dbReference>
<accession>A7IAR0</accession>
<name>RS8E_METB6</name>
<comment type="subunit">
    <text evidence="1">Part of the 30S ribosomal subunit.</text>
</comment>
<comment type="similarity">
    <text evidence="1">Belongs to the eukaryotic ribosomal protein eS8 family.</text>
</comment>
<proteinExistence type="inferred from homology"/>